<name>GGNB2_XENLA</name>
<organism>
    <name type="scientific">Xenopus laevis</name>
    <name type="common">African clawed frog</name>
    <dbReference type="NCBI Taxonomy" id="8355"/>
    <lineage>
        <taxon>Eukaryota</taxon>
        <taxon>Metazoa</taxon>
        <taxon>Chordata</taxon>
        <taxon>Craniata</taxon>
        <taxon>Vertebrata</taxon>
        <taxon>Euteleostomi</taxon>
        <taxon>Amphibia</taxon>
        <taxon>Batrachia</taxon>
        <taxon>Anura</taxon>
        <taxon>Pipoidea</taxon>
        <taxon>Pipidae</taxon>
        <taxon>Xenopodinae</taxon>
        <taxon>Xenopus</taxon>
        <taxon>Xenopus</taxon>
    </lineage>
</organism>
<feature type="chain" id="PRO_0000239352" description="Gametogenetin-binding protein 2">
    <location>
        <begin position="1"/>
        <end position="664"/>
    </location>
</feature>
<feature type="region of interest" description="Disordered" evidence="2">
    <location>
        <begin position="375"/>
        <end position="425"/>
    </location>
</feature>
<feature type="region of interest" description="Disordered" evidence="2">
    <location>
        <begin position="447"/>
        <end position="476"/>
    </location>
</feature>
<feature type="compositionally biased region" description="Basic residues" evidence="2">
    <location>
        <begin position="376"/>
        <end position="388"/>
    </location>
</feature>
<feature type="compositionally biased region" description="Polar residues" evidence="2">
    <location>
        <begin position="452"/>
        <end position="475"/>
    </location>
</feature>
<keyword id="KW-0963">Cytoplasm</keyword>
<keyword id="KW-0217">Developmental protein</keyword>
<keyword id="KW-0221">Differentiation</keyword>
<keyword id="KW-1185">Reference proteome</keyword>
<keyword id="KW-0744">Spermatogenesis</keyword>
<protein>
    <recommendedName>
        <fullName>Gametogenetin-binding protein 2</fullName>
    </recommendedName>
    <alternativeName>
        <fullName>Protein ZNF403</fullName>
    </alternativeName>
</protein>
<evidence type="ECO:0000250" key="1"/>
<evidence type="ECO:0000256" key="2">
    <source>
        <dbReference type="SAM" id="MobiDB-lite"/>
    </source>
</evidence>
<reference key="1">
    <citation type="submission" date="2004-09" db="EMBL/GenBank/DDBJ databases">
        <authorList>
            <consortium name="NIH - Xenopus Gene Collection (XGC) project"/>
        </authorList>
    </citation>
    <scope>NUCLEOTIDE SEQUENCE [LARGE SCALE MRNA]</scope>
    <source>
        <tissue>Kidney</tissue>
    </source>
</reference>
<proteinExistence type="evidence at transcript level"/>
<accession>Q63ZG9</accession>
<gene>
    <name type="primary">ggnbp2</name>
    <name type="synonym">znf403</name>
</gene>
<dbReference type="EMBL" id="BC082948">
    <property type="protein sequence ID" value="AAH82948.1"/>
    <property type="molecule type" value="mRNA"/>
</dbReference>
<dbReference type="RefSeq" id="NP_001088126.1">
    <property type="nucleotide sequence ID" value="NM_001094657.1"/>
</dbReference>
<dbReference type="SMR" id="Q63ZG9"/>
<dbReference type="DNASU" id="494831"/>
<dbReference type="GeneID" id="494831"/>
<dbReference type="KEGG" id="xla:494831"/>
<dbReference type="AGR" id="Xenbase:XB-GENE-942050"/>
<dbReference type="CTD" id="494831"/>
<dbReference type="Xenbase" id="XB-GENE-942050">
    <property type="gene designation" value="ggnbp2.S"/>
</dbReference>
<dbReference type="OrthoDB" id="2422440at2759"/>
<dbReference type="Proteomes" id="UP000186698">
    <property type="component" value="Chromosome 2S"/>
</dbReference>
<dbReference type="Bgee" id="494831">
    <property type="expression patterns" value="Expressed in blastula and 19 other cell types or tissues"/>
</dbReference>
<dbReference type="GO" id="GO:0005737">
    <property type="term" value="C:cytoplasm"/>
    <property type="evidence" value="ECO:0000318"/>
    <property type="project" value="GO_Central"/>
</dbReference>
<dbReference type="GO" id="GO:0005634">
    <property type="term" value="C:nucleus"/>
    <property type="evidence" value="ECO:0000318"/>
    <property type="project" value="GO_Central"/>
</dbReference>
<dbReference type="GO" id="GO:0030154">
    <property type="term" value="P:cell differentiation"/>
    <property type="evidence" value="ECO:0007669"/>
    <property type="project" value="UniProtKB-KW"/>
</dbReference>
<dbReference type="GO" id="GO:0007283">
    <property type="term" value="P:spermatogenesis"/>
    <property type="evidence" value="ECO:0007669"/>
    <property type="project" value="UniProtKB-KW"/>
</dbReference>
<dbReference type="InterPro" id="IPR026073">
    <property type="entry name" value="GGNBP2"/>
</dbReference>
<dbReference type="PANTHER" id="PTHR13601">
    <property type="entry name" value="GAMETOGENETIN-BINDING PROTEIN 2"/>
    <property type="match status" value="1"/>
</dbReference>
<dbReference type="PANTHER" id="PTHR13601:SF2">
    <property type="entry name" value="GAMETOGENETIN-BINDING PROTEIN 2"/>
    <property type="match status" value="1"/>
</dbReference>
<comment type="function">
    <text evidence="1">May be involved in spermatogenesis.</text>
</comment>
<comment type="subcellular location">
    <subcellularLocation>
        <location evidence="1">Cytoplasm</location>
    </subcellularLocation>
</comment>
<sequence length="664" mass="76305">MARLVAVVKYSDEDYPFEKRQMPLYIDDSLTMVLEFSDNMLNLDKQQIDTVQLEQFIQHHKMLTEQDLTAALTVTSREVFNALSQLLPCVGCRRCVERLFSQVMQTGIQALDPLSVGANGVLTLSHSFMTDATKLYTLFYVCGSKLNSMIDTIAKNKKGKKNNRCKFHSLDVRKPKPLGGHWMDVWEVMSPECRDEVALIDSNCLLETLENYLQKHRFCADCKNKVHRAFNILTGELDFSKVKGYCANVYQGLRCCPHEGHIHLCCETDFIAHVLGRAEPEFAGGYERRERHAKTIDVAQEEVLTCLGIHLYERLHRIWLKLRAEVQTRQMLFYLGVDALRKSFEVTVEKVQGISRMDQYFKDILEEEKVQELKQEKKRQKKNRRKNKTSCDLPAPHETKSANASQNNDPPGFMESGGDSCNTSEDRNMCAEVTVKNEDLLRSHKMKKGLTPHSNVSDCGYSSSLEGSEPGSQEGSDVACAEGICKHDEAGDDEKDEEEGDSCVECWNNCTKDNIKGKSKKKKKKCKPFKCENENTLKQVPYNTESSDVHSNPNEENKVFNFCMDSEFPRRPWIYHRNEFFSDMSSSESQMRETKSLKELLDESECSSQEEDEITQDDIQAFKETYQTFYRDRQQFRQCLKENFKQFCLHRNPSLLVGKTGAIN</sequence>